<gene>
    <name evidence="1" type="primary">rimK</name>
    <name type="ordered locus">Smlt3769</name>
</gene>
<name>RIMK_STRMK</name>
<proteinExistence type="inferred from homology"/>
<reference key="1">
    <citation type="journal article" date="2008" name="Genome Biol.">
        <title>The complete genome, comparative and functional analysis of Stenotrophomonas maltophilia reveals an organism heavily shielded by drug resistance determinants.</title>
        <authorList>
            <person name="Crossman L.C."/>
            <person name="Gould V.C."/>
            <person name="Dow J.M."/>
            <person name="Vernikos G.S."/>
            <person name="Okazaki A."/>
            <person name="Sebaihia M."/>
            <person name="Saunders D."/>
            <person name="Arrowsmith C."/>
            <person name="Carver T."/>
            <person name="Peters N."/>
            <person name="Adlem E."/>
            <person name="Kerhornou A."/>
            <person name="Lord A."/>
            <person name="Murphy L."/>
            <person name="Seeger K."/>
            <person name="Squares R."/>
            <person name="Rutter S."/>
            <person name="Quail M.A."/>
            <person name="Rajandream M.A."/>
            <person name="Harris D."/>
            <person name="Churcher C."/>
            <person name="Bentley S.D."/>
            <person name="Parkhill J."/>
            <person name="Thomson N.R."/>
            <person name="Avison M.B."/>
        </authorList>
    </citation>
    <scope>NUCLEOTIDE SEQUENCE [LARGE SCALE GENOMIC DNA]</scope>
    <source>
        <strain>K279a</strain>
    </source>
</reference>
<keyword id="KW-0067">ATP-binding</keyword>
<keyword id="KW-0436">Ligase</keyword>
<keyword id="KW-0460">Magnesium</keyword>
<keyword id="KW-0464">Manganese</keyword>
<keyword id="KW-0479">Metal-binding</keyword>
<keyword id="KW-0547">Nucleotide-binding</keyword>
<keyword id="KW-0648">Protein biosynthesis</keyword>
<keyword id="KW-1185">Reference proteome</keyword>
<protein>
    <recommendedName>
        <fullName evidence="1">Probable alpha-L-glutamate ligase</fullName>
        <ecNumber evidence="1">6.3.2.-</ecNumber>
    </recommendedName>
</protein>
<sequence length="292" mass="31407">MKLAILSRNSSLYSTRRLVEAARARGHTVRILDPLRCYMRIAADGFSMHYKGRPMTGVDMVIPRIGASITRYGTAVLRQFELMGARTPNPSDAILRSRDKLRAHQLLAAKGIDMPVTVFGDNPDDTVDLLSMLGPPPHVVKLNEGTQGRGVILTEKASASRGIVEALRGLYANFLMQEFIGEAKGADLRCFVVGDQVVASMQRQAPEGDFRSNLHAGGTAVAAKASRAEQQVAVRSAKALGLSVCGVDLIRSARGPLVLEVNSTPGLEGIEAACGVDVATRIIEHVEKLKKP</sequence>
<evidence type="ECO:0000255" key="1">
    <source>
        <dbReference type="HAMAP-Rule" id="MF_01552"/>
    </source>
</evidence>
<dbReference type="EC" id="6.3.2.-" evidence="1"/>
<dbReference type="EMBL" id="AM743169">
    <property type="protein sequence ID" value="CAQ47178.1"/>
    <property type="molecule type" value="Genomic_DNA"/>
</dbReference>
<dbReference type="RefSeq" id="WP_005410807.1">
    <property type="nucleotide sequence ID" value="NC_010943.1"/>
</dbReference>
<dbReference type="SMR" id="B2FSC4"/>
<dbReference type="EnsemblBacteria" id="CAQ47178">
    <property type="protein sequence ID" value="CAQ47178"/>
    <property type="gene ID" value="Smlt3769"/>
</dbReference>
<dbReference type="GeneID" id="93834757"/>
<dbReference type="KEGG" id="sml:Smlt3769"/>
<dbReference type="eggNOG" id="COG0189">
    <property type="taxonomic scope" value="Bacteria"/>
</dbReference>
<dbReference type="HOGENOM" id="CLU_054353_0_1_6"/>
<dbReference type="Proteomes" id="UP000008840">
    <property type="component" value="Chromosome"/>
</dbReference>
<dbReference type="GO" id="GO:0005737">
    <property type="term" value="C:cytoplasm"/>
    <property type="evidence" value="ECO:0007669"/>
    <property type="project" value="TreeGrafter"/>
</dbReference>
<dbReference type="GO" id="GO:0005524">
    <property type="term" value="F:ATP binding"/>
    <property type="evidence" value="ECO:0007669"/>
    <property type="project" value="UniProtKB-UniRule"/>
</dbReference>
<dbReference type="GO" id="GO:0046872">
    <property type="term" value="F:metal ion binding"/>
    <property type="evidence" value="ECO:0007669"/>
    <property type="project" value="UniProtKB-KW"/>
</dbReference>
<dbReference type="GO" id="GO:0018169">
    <property type="term" value="F:ribosomal S6-glutamic acid ligase activity"/>
    <property type="evidence" value="ECO:0007669"/>
    <property type="project" value="TreeGrafter"/>
</dbReference>
<dbReference type="GO" id="GO:0036211">
    <property type="term" value="P:protein modification process"/>
    <property type="evidence" value="ECO:0007669"/>
    <property type="project" value="InterPro"/>
</dbReference>
<dbReference type="GO" id="GO:0009432">
    <property type="term" value="P:SOS response"/>
    <property type="evidence" value="ECO:0007669"/>
    <property type="project" value="TreeGrafter"/>
</dbReference>
<dbReference type="GO" id="GO:0006412">
    <property type="term" value="P:translation"/>
    <property type="evidence" value="ECO:0007669"/>
    <property type="project" value="UniProtKB-KW"/>
</dbReference>
<dbReference type="FunFam" id="3.30.1490.20:FF:000005">
    <property type="entry name" value="Probable alpha-L-glutamate ligase 1"/>
    <property type="match status" value="1"/>
</dbReference>
<dbReference type="Gene3D" id="3.40.50.20">
    <property type="match status" value="1"/>
</dbReference>
<dbReference type="Gene3D" id="3.30.1490.20">
    <property type="entry name" value="ATP-grasp fold, A domain"/>
    <property type="match status" value="1"/>
</dbReference>
<dbReference type="Gene3D" id="3.30.470.20">
    <property type="entry name" value="ATP-grasp fold, B domain"/>
    <property type="match status" value="1"/>
</dbReference>
<dbReference type="HAMAP" id="MF_01552">
    <property type="entry name" value="RimK"/>
    <property type="match status" value="1"/>
</dbReference>
<dbReference type="InterPro" id="IPR011761">
    <property type="entry name" value="ATP-grasp"/>
</dbReference>
<dbReference type="InterPro" id="IPR013651">
    <property type="entry name" value="ATP-grasp_RimK-type"/>
</dbReference>
<dbReference type="InterPro" id="IPR013815">
    <property type="entry name" value="ATP_grasp_subdomain_1"/>
</dbReference>
<dbReference type="InterPro" id="IPR023533">
    <property type="entry name" value="RimK"/>
</dbReference>
<dbReference type="InterPro" id="IPR041107">
    <property type="entry name" value="Rimk_N"/>
</dbReference>
<dbReference type="InterPro" id="IPR004666">
    <property type="entry name" value="Rp_bS6_RimK/Lys_biosynth_LsyX"/>
</dbReference>
<dbReference type="NCBIfam" id="NF007764">
    <property type="entry name" value="PRK10446.1"/>
    <property type="match status" value="1"/>
</dbReference>
<dbReference type="NCBIfam" id="TIGR00768">
    <property type="entry name" value="rimK_fam"/>
    <property type="match status" value="1"/>
</dbReference>
<dbReference type="PANTHER" id="PTHR21621:SF7">
    <property type="entry name" value="RIBOSOMAL PROTEIN BS6--L-GLUTAMATE LIGASE"/>
    <property type="match status" value="1"/>
</dbReference>
<dbReference type="PANTHER" id="PTHR21621">
    <property type="entry name" value="RIBOSOMAL PROTEIN S6 MODIFICATION PROTEIN"/>
    <property type="match status" value="1"/>
</dbReference>
<dbReference type="Pfam" id="PF08443">
    <property type="entry name" value="RimK"/>
    <property type="match status" value="1"/>
</dbReference>
<dbReference type="Pfam" id="PF18030">
    <property type="entry name" value="Rimk_N"/>
    <property type="match status" value="1"/>
</dbReference>
<dbReference type="SUPFAM" id="SSF56059">
    <property type="entry name" value="Glutathione synthetase ATP-binding domain-like"/>
    <property type="match status" value="1"/>
</dbReference>
<dbReference type="PROSITE" id="PS50975">
    <property type="entry name" value="ATP_GRASP"/>
    <property type="match status" value="1"/>
</dbReference>
<accession>B2FSC4</accession>
<organism>
    <name type="scientific">Stenotrophomonas maltophilia (strain K279a)</name>
    <dbReference type="NCBI Taxonomy" id="522373"/>
    <lineage>
        <taxon>Bacteria</taxon>
        <taxon>Pseudomonadati</taxon>
        <taxon>Pseudomonadota</taxon>
        <taxon>Gammaproteobacteria</taxon>
        <taxon>Lysobacterales</taxon>
        <taxon>Lysobacteraceae</taxon>
        <taxon>Stenotrophomonas</taxon>
        <taxon>Stenotrophomonas maltophilia group</taxon>
    </lineage>
</organism>
<comment type="cofactor">
    <cofactor evidence="1">
        <name>Mg(2+)</name>
        <dbReference type="ChEBI" id="CHEBI:18420"/>
    </cofactor>
    <cofactor evidence="1">
        <name>Mn(2+)</name>
        <dbReference type="ChEBI" id="CHEBI:29035"/>
    </cofactor>
    <text evidence="1">Binds 2 magnesium or manganese ions per subunit.</text>
</comment>
<comment type="similarity">
    <text evidence="1">Belongs to the RimK family.</text>
</comment>
<feature type="chain" id="PRO_1000146951" description="Probable alpha-L-glutamate ligase">
    <location>
        <begin position="1"/>
        <end position="292"/>
    </location>
</feature>
<feature type="domain" description="ATP-grasp" evidence="1">
    <location>
        <begin position="104"/>
        <end position="287"/>
    </location>
</feature>
<feature type="binding site" evidence="1">
    <location>
        <position position="141"/>
    </location>
    <ligand>
        <name>ATP</name>
        <dbReference type="ChEBI" id="CHEBI:30616"/>
    </ligand>
</feature>
<feature type="binding site" evidence="1">
    <location>
        <begin position="178"/>
        <end position="179"/>
    </location>
    <ligand>
        <name>ATP</name>
        <dbReference type="ChEBI" id="CHEBI:30616"/>
    </ligand>
</feature>
<feature type="binding site" evidence="1">
    <location>
        <position position="187"/>
    </location>
    <ligand>
        <name>ATP</name>
        <dbReference type="ChEBI" id="CHEBI:30616"/>
    </ligand>
</feature>
<feature type="binding site" evidence="1">
    <location>
        <begin position="211"/>
        <end position="213"/>
    </location>
    <ligand>
        <name>ATP</name>
        <dbReference type="ChEBI" id="CHEBI:30616"/>
    </ligand>
</feature>
<feature type="binding site" evidence="1">
    <location>
        <position position="248"/>
    </location>
    <ligand>
        <name>Mg(2+)</name>
        <dbReference type="ChEBI" id="CHEBI:18420"/>
        <label>1</label>
    </ligand>
</feature>
<feature type="binding site" evidence="1">
    <location>
        <position position="248"/>
    </location>
    <ligand>
        <name>Mn(2+)</name>
        <dbReference type="ChEBI" id="CHEBI:29035"/>
        <label>1</label>
    </ligand>
</feature>
<feature type="binding site" evidence="1">
    <location>
        <position position="260"/>
    </location>
    <ligand>
        <name>Mg(2+)</name>
        <dbReference type="ChEBI" id="CHEBI:18420"/>
        <label>1</label>
    </ligand>
</feature>
<feature type="binding site" evidence="1">
    <location>
        <position position="260"/>
    </location>
    <ligand>
        <name>Mg(2+)</name>
        <dbReference type="ChEBI" id="CHEBI:18420"/>
        <label>2</label>
    </ligand>
</feature>
<feature type="binding site" evidence="1">
    <location>
        <position position="260"/>
    </location>
    <ligand>
        <name>Mn(2+)</name>
        <dbReference type="ChEBI" id="CHEBI:29035"/>
        <label>1</label>
    </ligand>
</feature>
<feature type="binding site" evidence="1">
    <location>
        <position position="260"/>
    </location>
    <ligand>
        <name>Mn(2+)</name>
        <dbReference type="ChEBI" id="CHEBI:29035"/>
        <label>2</label>
    </ligand>
</feature>
<feature type="binding site" evidence="1">
    <location>
        <position position="262"/>
    </location>
    <ligand>
        <name>Mg(2+)</name>
        <dbReference type="ChEBI" id="CHEBI:18420"/>
        <label>2</label>
    </ligand>
</feature>
<feature type="binding site" evidence="1">
    <location>
        <position position="262"/>
    </location>
    <ligand>
        <name>Mn(2+)</name>
        <dbReference type="ChEBI" id="CHEBI:29035"/>
        <label>2</label>
    </ligand>
</feature>